<gene>
    <name evidence="1" type="primary">citX</name>
    <name type="ordered locus">ECUMN_0707</name>
</gene>
<feature type="chain" id="PRO_1000189603" description="Apo-citrate lyase phosphoribosyl-dephospho-CoA transferase">
    <location>
        <begin position="1"/>
        <end position="183"/>
    </location>
</feature>
<evidence type="ECO:0000255" key="1">
    <source>
        <dbReference type="HAMAP-Rule" id="MF_00398"/>
    </source>
</evidence>
<organism>
    <name type="scientific">Escherichia coli O17:K52:H18 (strain UMN026 / ExPEC)</name>
    <dbReference type="NCBI Taxonomy" id="585056"/>
    <lineage>
        <taxon>Bacteria</taxon>
        <taxon>Pseudomonadati</taxon>
        <taxon>Pseudomonadota</taxon>
        <taxon>Gammaproteobacteria</taxon>
        <taxon>Enterobacterales</taxon>
        <taxon>Enterobacteriaceae</taxon>
        <taxon>Escherichia</taxon>
    </lineage>
</organism>
<keyword id="KW-0548">Nucleotidyltransferase</keyword>
<keyword id="KW-0808">Transferase</keyword>
<proteinExistence type="inferred from homology"/>
<protein>
    <recommendedName>
        <fullName>Apo-citrate lyase phosphoribosyl-dephospho-CoA transferase</fullName>
        <ecNumber evidence="1">2.7.7.61</ecNumber>
    </recommendedName>
    <alternativeName>
        <fullName evidence="1">Apo-ACP nucleodityltransferase</fullName>
    </alternativeName>
    <alternativeName>
        <fullName evidence="1">Holo-ACP synthase</fullName>
    </alternativeName>
    <alternativeName>
        <fullName evidence="1">Holo-citrate lyase synthase</fullName>
    </alternativeName>
</protein>
<reference key="1">
    <citation type="journal article" date="2009" name="PLoS Genet.">
        <title>Organised genome dynamics in the Escherichia coli species results in highly diverse adaptive paths.</title>
        <authorList>
            <person name="Touchon M."/>
            <person name="Hoede C."/>
            <person name="Tenaillon O."/>
            <person name="Barbe V."/>
            <person name="Baeriswyl S."/>
            <person name="Bidet P."/>
            <person name="Bingen E."/>
            <person name="Bonacorsi S."/>
            <person name="Bouchier C."/>
            <person name="Bouvet O."/>
            <person name="Calteau A."/>
            <person name="Chiapello H."/>
            <person name="Clermont O."/>
            <person name="Cruveiller S."/>
            <person name="Danchin A."/>
            <person name="Diard M."/>
            <person name="Dossat C."/>
            <person name="Karoui M.E."/>
            <person name="Frapy E."/>
            <person name="Garry L."/>
            <person name="Ghigo J.M."/>
            <person name="Gilles A.M."/>
            <person name="Johnson J."/>
            <person name="Le Bouguenec C."/>
            <person name="Lescat M."/>
            <person name="Mangenot S."/>
            <person name="Martinez-Jehanne V."/>
            <person name="Matic I."/>
            <person name="Nassif X."/>
            <person name="Oztas S."/>
            <person name="Petit M.A."/>
            <person name="Pichon C."/>
            <person name="Rouy Z."/>
            <person name="Ruf C.S."/>
            <person name="Schneider D."/>
            <person name="Tourret J."/>
            <person name="Vacherie B."/>
            <person name="Vallenet D."/>
            <person name="Medigue C."/>
            <person name="Rocha E.P.C."/>
            <person name="Denamur E."/>
        </authorList>
    </citation>
    <scope>NUCLEOTIDE SEQUENCE [LARGE SCALE GENOMIC DNA]</scope>
    <source>
        <strain>UMN026 / ExPEC</strain>
    </source>
</reference>
<comment type="function">
    <text evidence="1">Transfers 2-(5''-triphosphoribosyl)-3'-dephosphocoenzyme-A on a serine residue to the apo-acyl carrier protein (gamma chain) of the citrate lyase to yield holo-acyl carrier protein.</text>
</comment>
<comment type="catalytic activity">
    <reaction evidence="1">
        <text>apo-[citrate lyase ACP] + 2'-(5''-triphospho-alpha-D-ribosyl)-3'-dephospho-CoA = holo-[citrate lyase ACP] + diphosphate</text>
        <dbReference type="Rhea" id="RHEA:16333"/>
        <dbReference type="Rhea" id="RHEA-COMP:10157"/>
        <dbReference type="Rhea" id="RHEA-COMP:10158"/>
        <dbReference type="ChEBI" id="CHEBI:29999"/>
        <dbReference type="ChEBI" id="CHEBI:33019"/>
        <dbReference type="ChEBI" id="CHEBI:61378"/>
        <dbReference type="ChEBI" id="CHEBI:82683"/>
        <dbReference type="EC" id="2.7.7.61"/>
    </reaction>
</comment>
<comment type="similarity">
    <text evidence="1">Belongs to the CitX family.</text>
</comment>
<dbReference type="EC" id="2.7.7.61" evidence="1"/>
<dbReference type="EMBL" id="CU928163">
    <property type="protein sequence ID" value="CAR11921.1"/>
    <property type="molecule type" value="Genomic_DNA"/>
</dbReference>
<dbReference type="RefSeq" id="WP_000550422.1">
    <property type="nucleotide sequence ID" value="NC_011751.1"/>
</dbReference>
<dbReference type="RefSeq" id="YP_002411467.1">
    <property type="nucleotide sequence ID" value="NC_011751.1"/>
</dbReference>
<dbReference type="SMR" id="B7N9M0"/>
<dbReference type="STRING" id="585056.ECUMN_0707"/>
<dbReference type="GeneID" id="93776871"/>
<dbReference type="KEGG" id="eum:ECUMN_0707"/>
<dbReference type="PATRIC" id="fig|585056.7.peg.905"/>
<dbReference type="HOGENOM" id="CLU_104529_1_1_6"/>
<dbReference type="Proteomes" id="UP000007097">
    <property type="component" value="Chromosome"/>
</dbReference>
<dbReference type="GO" id="GO:0050519">
    <property type="term" value="F:holo-citrate lyase synthase activity"/>
    <property type="evidence" value="ECO:0007669"/>
    <property type="project" value="UniProtKB-UniRule"/>
</dbReference>
<dbReference type="GO" id="GO:0051191">
    <property type="term" value="P:prosthetic group biosynthetic process"/>
    <property type="evidence" value="ECO:0007669"/>
    <property type="project" value="InterPro"/>
</dbReference>
<dbReference type="HAMAP" id="MF_00398">
    <property type="entry name" value="CitX"/>
    <property type="match status" value="1"/>
</dbReference>
<dbReference type="InterPro" id="IPR005551">
    <property type="entry name" value="CitX"/>
</dbReference>
<dbReference type="NCBIfam" id="TIGR03124">
    <property type="entry name" value="citrate_citX"/>
    <property type="match status" value="1"/>
</dbReference>
<dbReference type="NCBIfam" id="NF002383">
    <property type="entry name" value="PRK01392.1"/>
    <property type="match status" value="1"/>
</dbReference>
<dbReference type="Pfam" id="PF03802">
    <property type="entry name" value="CitX"/>
    <property type="match status" value="1"/>
</dbReference>
<sequence length="183" mass="20270">MHLLPELASHHAVSIPELLVSRDERQARQHVWLKRHPVPLVSFTVVAPGPIKDSEVTRRIFNHGVTALRALAAKQGWQIQEQAALVSASGPEGMLSIAAPARDLKLATIELEHSHPLGRLWDIDVLTPEGEILSRRDYSLPPRRCLLCEQSAAVCARGKTHQLTDLLNRMEALLNDVDACNVN</sequence>
<accession>B7N9M0</accession>
<name>CITX_ECOLU</name>